<reference key="1">
    <citation type="submission" date="2008-06" db="EMBL/GenBank/DDBJ databases">
        <title>Genome and proteome analysis of A. pleuropneumoniae serotype 7.</title>
        <authorList>
            <person name="Linke B."/>
            <person name="Buettner F."/>
            <person name="Martinez-Arias R."/>
            <person name="Goesmann A."/>
            <person name="Baltes N."/>
            <person name="Tegetmeyer H."/>
            <person name="Singh M."/>
            <person name="Gerlach G.F."/>
        </authorList>
    </citation>
    <scope>NUCLEOTIDE SEQUENCE [LARGE SCALE GENOMIC DNA]</scope>
    <source>
        <strain>AP76</strain>
    </source>
</reference>
<dbReference type="EC" id="6.3.4.20" evidence="1"/>
<dbReference type="EMBL" id="CP001091">
    <property type="protein sequence ID" value="ACE61805.1"/>
    <property type="molecule type" value="Genomic_DNA"/>
</dbReference>
<dbReference type="RefSeq" id="WP_005617583.1">
    <property type="nucleotide sequence ID" value="NC_010939.1"/>
</dbReference>
<dbReference type="SMR" id="B3H1X8"/>
<dbReference type="KEGG" id="apa:APP7_1153"/>
<dbReference type="HOGENOM" id="CLU_081854_0_0_6"/>
<dbReference type="UniPathway" id="UPA00391"/>
<dbReference type="Proteomes" id="UP000001226">
    <property type="component" value="Chromosome"/>
</dbReference>
<dbReference type="GO" id="GO:0005524">
    <property type="term" value="F:ATP binding"/>
    <property type="evidence" value="ECO:0007669"/>
    <property type="project" value="UniProtKB-UniRule"/>
</dbReference>
<dbReference type="GO" id="GO:0016879">
    <property type="term" value="F:ligase activity, forming carbon-nitrogen bonds"/>
    <property type="evidence" value="ECO:0007669"/>
    <property type="project" value="UniProtKB-UniRule"/>
</dbReference>
<dbReference type="GO" id="GO:0008270">
    <property type="term" value="F:zinc ion binding"/>
    <property type="evidence" value="ECO:0007669"/>
    <property type="project" value="UniProtKB-UniRule"/>
</dbReference>
<dbReference type="GO" id="GO:0008616">
    <property type="term" value="P:queuosine biosynthetic process"/>
    <property type="evidence" value="ECO:0007669"/>
    <property type="project" value="UniProtKB-UniRule"/>
</dbReference>
<dbReference type="CDD" id="cd01995">
    <property type="entry name" value="QueC-like"/>
    <property type="match status" value="1"/>
</dbReference>
<dbReference type="Gene3D" id="3.40.50.620">
    <property type="entry name" value="HUPs"/>
    <property type="match status" value="1"/>
</dbReference>
<dbReference type="HAMAP" id="MF_01633">
    <property type="entry name" value="QueC"/>
    <property type="match status" value="1"/>
</dbReference>
<dbReference type="InterPro" id="IPR018317">
    <property type="entry name" value="QueC"/>
</dbReference>
<dbReference type="InterPro" id="IPR014729">
    <property type="entry name" value="Rossmann-like_a/b/a_fold"/>
</dbReference>
<dbReference type="NCBIfam" id="TIGR00364">
    <property type="entry name" value="7-cyano-7-deazaguanine synthase QueC"/>
    <property type="match status" value="1"/>
</dbReference>
<dbReference type="PANTHER" id="PTHR42914">
    <property type="entry name" value="7-CYANO-7-DEAZAGUANINE SYNTHASE"/>
    <property type="match status" value="1"/>
</dbReference>
<dbReference type="PANTHER" id="PTHR42914:SF1">
    <property type="entry name" value="7-CYANO-7-DEAZAGUANINE SYNTHASE"/>
    <property type="match status" value="1"/>
</dbReference>
<dbReference type="Pfam" id="PF06508">
    <property type="entry name" value="QueC"/>
    <property type="match status" value="1"/>
</dbReference>
<dbReference type="PIRSF" id="PIRSF006293">
    <property type="entry name" value="ExsB"/>
    <property type="match status" value="1"/>
</dbReference>
<dbReference type="SUPFAM" id="SSF52402">
    <property type="entry name" value="Adenine nucleotide alpha hydrolases-like"/>
    <property type="match status" value="1"/>
</dbReference>
<sequence length="222" mass="24862">MNSTPKAVVIFSGGQDSTTCLFQAIQEFGVENVEVVTFQYGQRHAIELEKAAWIAKDLGVKQTLIDTSVIKAITSNAMMEEREIKQEGNTPNTFVDGRNALFLLYTAIYAKGQGIRTIFTGVCETDFSGYPDCRDVFVKSMNVTLNLAMDYNFNIRTPLMYLTKKQTWALADKLGAFDYIRQHTHTCYLGVEGGCHTCPSCVLREKGLNEYLSEKTSGQKYV</sequence>
<evidence type="ECO:0000255" key="1">
    <source>
        <dbReference type="HAMAP-Rule" id="MF_01633"/>
    </source>
</evidence>
<organism>
    <name type="scientific">Actinobacillus pleuropneumoniae serotype 7 (strain AP76)</name>
    <dbReference type="NCBI Taxonomy" id="537457"/>
    <lineage>
        <taxon>Bacteria</taxon>
        <taxon>Pseudomonadati</taxon>
        <taxon>Pseudomonadota</taxon>
        <taxon>Gammaproteobacteria</taxon>
        <taxon>Pasteurellales</taxon>
        <taxon>Pasteurellaceae</taxon>
        <taxon>Actinobacillus</taxon>
    </lineage>
</organism>
<name>QUEC_ACTP7</name>
<protein>
    <recommendedName>
        <fullName evidence="1">7-cyano-7-deazaguanine synthase</fullName>
        <ecNumber evidence="1">6.3.4.20</ecNumber>
    </recommendedName>
    <alternativeName>
        <fullName evidence="1">7-cyano-7-carbaguanine synthase</fullName>
    </alternativeName>
    <alternativeName>
        <fullName evidence="1">PreQ(0) synthase</fullName>
    </alternativeName>
    <alternativeName>
        <fullName evidence="1">Queuosine biosynthesis protein QueC</fullName>
    </alternativeName>
</protein>
<keyword id="KW-0067">ATP-binding</keyword>
<keyword id="KW-0436">Ligase</keyword>
<keyword id="KW-0479">Metal-binding</keyword>
<keyword id="KW-0547">Nucleotide-binding</keyword>
<keyword id="KW-0671">Queuosine biosynthesis</keyword>
<keyword id="KW-0862">Zinc</keyword>
<proteinExistence type="inferred from homology"/>
<comment type="function">
    <text evidence="1">Catalyzes the ATP-dependent conversion of 7-carboxy-7-deazaguanine (CDG) to 7-cyano-7-deazaguanine (preQ(0)).</text>
</comment>
<comment type="catalytic activity">
    <reaction evidence="1">
        <text>7-carboxy-7-deazaguanine + NH4(+) + ATP = 7-cyano-7-deazaguanine + ADP + phosphate + H2O + H(+)</text>
        <dbReference type="Rhea" id="RHEA:27982"/>
        <dbReference type="ChEBI" id="CHEBI:15377"/>
        <dbReference type="ChEBI" id="CHEBI:15378"/>
        <dbReference type="ChEBI" id="CHEBI:28938"/>
        <dbReference type="ChEBI" id="CHEBI:30616"/>
        <dbReference type="ChEBI" id="CHEBI:43474"/>
        <dbReference type="ChEBI" id="CHEBI:45075"/>
        <dbReference type="ChEBI" id="CHEBI:61036"/>
        <dbReference type="ChEBI" id="CHEBI:456216"/>
        <dbReference type="EC" id="6.3.4.20"/>
    </reaction>
</comment>
<comment type="cofactor">
    <cofactor evidence="1">
        <name>Zn(2+)</name>
        <dbReference type="ChEBI" id="CHEBI:29105"/>
    </cofactor>
    <text evidence="1">Binds 1 zinc ion per subunit.</text>
</comment>
<comment type="pathway">
    <text evidence="1">Purine metabolism; 7-cyano-7-deazaguanine biosynthesis.</text>
</comment>
<comment type="similarity">
    <text evidence="1">Belongs to the QueC family.</text>
</comment>
<accession>B3H1X8</accession>
<feature type="chain" id="PRO_1000186545" description="7-cyano-7-deazaguanine synthase">
    <location>
        <begin position="1"/>
        <end position="222"/>
    </location>
</feature>
<feature type="binding site" evidence="1">
    <location>
        <begin position="11"/>
        <end position="21"/>
    </location>
    <ligand>
        <name>ATP</name>
        <dbReference type="ChEBI" id="CHEBI:30616"/>
    </ligand>
</feature>
<feature type="binding site" evidence="1">
    <location>
        <position position="187"/>
    </location>
    <ligand>
        <name>Zn(2+)</name>
        <dbReference type="ChEBI" id="CHEBI:29105"/>
    </ligand>
</feature>
<feature type="binding site" evidence="1">
    <location>
        <position position="195"/>
    </location>
    <ligand>
        <name>Zn(2+)</name>
        <dbReference type="ChEBI" id="CHEBI:29105"/>
    </ligand>
</feature>
<feature type="binding site" evidence="1">
    <location>
        <position position="198"/>
    </location>
    <ligand>
        <name>Zn(2+)</name>
        <dbReference type="ChEBI" id="CHEBI:29105"/>
    </ligand>
</feature>
<feature type="binding site" evidence="1">
    <location>
        <position position="201"/>
    </location>
    <ligand>
        <name>Zn(2+)</name>
        <dbReference type="ChEBI" id="CHEBI:29105"/>
    </ligand>
</feature>
<gene>
    <name evidence="1" type="primary">queC</name>
    <name type="ordered locus">APP7_1153</name>
</gene>